<gene>
    <name evidence="1" type="primary">panC</name>
    <name type="ordered locus">RPE_3413</name>
</gene>
<protein>
    <recommendedName>
        <fullName evidence="1">Pantothenate synthetase</fullName>
        <shortName evidence="1">PS</shortName>
        <ecNumber evidence="1">6.3.2.1</ecNumber>
    </recommendedName>
    <alternativeName>
        <fullName evidence="1">Pantoate--beta-alanine ligase</fullName>
    </alternativeName>
    <alternativeName>
        <fullName evidence="1">Pantoate-activating enzyme</fullName>
    </alternativeName>
</protein>
<comment type="function">
    <text evidence="1">Catalyzes the condensation of pantoate with beta-alanine in an ATP-dependent reaction via a pantoyl-adenylate intermediate.</text>
</comment>
<comment type="catalytic activity">
    <reaction evidence="1">
        <text>(R)-pantoate + beta-alanine + ATP = (R)-pantothenate + AMP + diphosphate + H(+)</text>
        <dbReference type="Rhea" id="RHEA:10912"/>
        <dbReference type="ChEBI" id="CHEBI:15378"/>
        <dbReference type="ChEBI" id="CHEBI:15980"/>
        <dbReference type="ChEBI" id="CHEBI:29032"/>
        <dbReference type="ChEBI" id="CHEBI:30616"/>
        <dbReference type="ChEBI" id="CHEBI:33019"/>
        <dbReference type="ChEBI" id="CHEBI:57966"/>
        <dbReference type="ChEBI" id="CHEBI:456215"/>
        <dbReference type="EC" id="6.3.2.1"/>
    </reaction>
</comment>
<comment type="pathway">
    <text evidence="1">Cofactor biosynthesis; (R)-pantothenate biosynthesis; (R)-pantothenate from (R)-pantoate and beta-alanine: step 1/1.</text>
</comment>
<comment type="subunit">
    <text evidence="1">Homodimer.</text>
</comment>
<comment type="subcellular location">
    <subcellularLocation>
        <location evidence="1">Cytoplasm</location>
    </subcellularLocation>
</comment>
<comment type="miscellaneous">
    <text evidence="1">The reaction proceeds by a bi uni uni bi ping pong mechanism.</text>
</comment>
<comment type="similarity">
    <text evidence="1">Belongs to the pantothenate synthetase family.</text>
</comment>
<comment type="sequence caution" evidence="2">
    <conflict type="erroneous initiation">
        <sequence resource="EMBL-CDS" id="ABJ07345"/>
    </conflict>
</comment>
<accession>Q07L39</accession>
<proteinExistence type="inferred from homology"/>
<evidence type="ECO:0000255" key="1">
    <source>
        <dbReference type="HAMAP-Rule" id="MF_00158"/>
    </source>
</evidence>
<evidence type="ECO:0000305" key="2"/>
<dbReference type="EC" id="6.3.2.1" evidence="1"/>
<dbReference type="EMBL" id="CP000463">
    <property type="protein sequence ID" value="ABJ07345.1"/>
    <property type="status" value="ALT_INIT"/>
    <property type="molecule type" value="Genomic_DNA"/>
</dbReference>
<dbReference type="SMR" id="Q07L39"/>
<dbReference type="STRING" id="316055.RPE_3413"/>
<dbReference type="KEGG" id="rpe:RPE_3413"/>
<dbReference type="eggNOG" id="COG0414">
    <property type="taxonomic scope" value="Bacteria"/>
</dbReference>
<dbReference type="HOGENOM" id="CLU_047148_0_0_5"/>
<dbReference type="OrthoDB" id="9773087at2"/>
<dbReference type="UniPathway" id="UPA00028">
    <property type="reaction ID" value="UER00005"/>
</dbReference>
<dbReference type="GO" id="GO:0005829">
    <property type="term" value="C:cytosol"/>
    <property type="evidence" value="ECO:0007669"/>
    <property type="project" value="TreeGrafter"/>
</dbReference>
<dbReference type="GO" id="GO:0005524">
    <property type="term" value="F:ATP binding"/>
    <property type="evidence" value="ECO:0007669"/>
    <property type="project" value="UniProtKB-KW"/>
</dbReference>
<dbReference type="GO" id="GO:0004592">
    <property type="term" value="F:pantoate-beta-alanine ligase activity"/>
    <property type="evidence" value="ECO:0007669"/>
    <property type="project" value="UniProtKB-UniRule"/>
</dbReference>
<dbReference type="GO" id="GO:0015940">
    <property type="term" value="P:pantothenate biosynthetic process"/>
    <property type="evidence" value="ECO:0007669"/>
    <property type="project" value="UniProtKB-UniRule"/>
</dbReference>
<dbReference type="CDD" id="cd00560">
    <property type="entry name" value="PanC"/>
    <property type="match status" value="1"/>
</dbReference>
<dbReference type="Gene3D" id="3.40.50.620">
    <property type="entry name" value="HUPs"/>
    <property type="match status" value="1"/>
</dbReference>
<dbReference type="Gene3D" id="3.30.1300.10">
    <property type="entry name" value="Pantoate-beta-alanine ligase, C-terminal domain"/>
    <property type="match status" value="1"/>
</dbReference>
<dbReference type="HAMAP" id="MF_00158">
    <property type="entry name" value="PanC"/>
    <property type="match status" value="1"/>
</dbReference>
<dbReference type="InterPro" id="IPR003721">
    <property type="entry name" value="Pantoate_ligase"/>
</dbReference>
<dbReference type="InterPro" id="IPR042176">
    <property type="entry name" value="Pantoate_ligase_C"/>
</dbReference>
<dbReference type="InterPro" id="IPR014729">
    <property type="entry name" value="Rossmann-like_a/b/a_fold"/>
</dbReference>
<dbReference type="NCBIfam" id="TIGR00018">
    <property type="entry name" value="panC"/>
    <property type="match status" value="1"/>
</dbReference>
<dbReference type="PANTHER" id="PTHR21299">
    <property type="entry name" value="CYTIDYLATE KINASE/PANTOATE-BETA-ALANINE LIGASE"/>
    <property type="match status" value="1"/>
</dbReference>
<dbReference type="PANTHER" id="PTHR21299:SF1">
    <property type="entry name" value="PANTOATE--BETA-ALANINE LIGASE"/>
    <property type="match status" value="1"/>
</dbReference>
<dbReference type="Pfam" id="PF02569">
    <property type="entry name" value="Pantoate_ligase"/>
    <property type="match status" value="1"/>
</dbReference>
<dbReference type="SUPFAM" id="SSF52374">
    <property type="entry name" value="Nucleotidylyl transferase"/>
    <property type="match status" value="1"/>
</dbReference>
<sequence>MSRSPIVARTLPALRRALDTIRARKASVALVPTMGALHEGHLALVRLAKRRASKVVVSIFVNPAQFAPNEDFASYPRTWKADLAKLAAEKVDLVWNPDAKTMYPAGFASKIITEGPALVGLEDRFRPQFFGGVTTVVGKLFAQVRPDFALFGEKDFQQLRVVTRMARDLDLGAKVIGVPTMRERDGLAMSSRNVYLSPEHRSAAPTLYRSLKEAAKRLRAGDDIDVALGGGAEMITAAGFKLDYLEARHAETLEPIASLEDGPIRLLVAARIGSTRLIDNVAV</sequence>
<reference key="1">
    <citation type="submission" date="2006-09" db="EMBL/GenBank/DDBJ databases">
        <title>Complete sequence of Rhodopseudomonas palustris BisA53.</title>
        <authorList>
            <consortium name="US DOE Joint Genome Institute"/>
            <person name="Copeland A."/>
            <person name="Lucas S."/>
            <person name="Lapidus A."/>
            <person name="Barry K."/>
            <person name="Detter J.C."/>
            <person name="Glavina del Rio T."/>
            <person name="Hammon N."/>
            <person name="Israni S."/>
            <person name="Dalin E."/>
            <person name="Tice H."/>
            <person name="Pitluck S."/>
            <person name="Chain P."/>
            <person name="Malfatti S."/>
            <person name="Shin M."/>
            <person name="Vergez L."/>
            <person name="Schmutz J."/>
            <person name="Larimer F."/>
            <person name="Land M."/>
            <person name="Hauser L."/>
            <person name="Pelletier D.A."/>
            <person name="Kyrpides N."/>
            <person name="Kim E."/>
            <person name="Harwood C.S."/>
            <person name="Oda Y."/>
            <person name="Richardson P."/>
        </authorList>
    </citation>
    <scope>NUCLEOTIDE SEQUENCE [LARGE SCALE GENOMIC DNA]</scope>
    <source>
        <strain>BisA53</strain>
    </source>
</reference>
<name>PANC_RHOP5</name>
<keyword id="KW-0067">ATP-binding</keyword>
<keyword id="KW-0963">Cytoplasm</keyword>
<keyword id="KW-0436">Ligase</keyword>
<keyword id="KW-0547">Nucleotide-binding</keyword>
<keyword id="KW-0566">Pantothenate biosynthesis</keyword>
<feature type="chain" id="PRO_0000305533" description="Pantothenate synthetase">
    <location>
        <begin position="1"/>
        <end position="283"/>
    </location>
</feature>
<feature type="active site" description="Proton donor" evidence="1">
    <location>
        <position position="41"/>
    </location>
</feature>
<feature type="binding site" evidence="1">
    <location>
        <begin position="34"/>
        <end position="41"/>
    </location>
    <ligand>
        <name>ATP</name>
        <dbReference type="ChEBI" id="CHEBI:30616"/>
    </ligand>
</feature>
<feature type="binding site" evidence="1">
    <location>
        <position position="65"/>
    </location>
    <ligand>
        <name>(R)-pantoate</name>
        <dbReference type="ChEBI" id="CHEBI:15980"/>
    </ligand>
</feature>
<feature type="binding site" evidence="1">
    <location>
        <position position="65"/>
    </location>
    <ligand>
        <name>beta-alanine</name>
        <dbReference type="ChEBI" id="CHEBI:57966"/>
    </ligand>
</feature>
<feature type="binding site" evidence="1">
    <location>
        <begin position="152"/>
        <end position="155"/>
    </location>
    <ligand>
        <name>ATP</name>
        <dbReference type="ChEBI" id="CHEBI:30616"/>
    </ligand>
</feature>
<feature type="binding site" evidence="1">
    <location>
        <position position="158"/>
    </location>
    <ligand>
        <name>(R)-pantoate</name>
        <dbReference type="ChEBI" id="CHEBI:15980"/>
    </ligand>
</feature>
<feature type="binding site" evidence="1">
    <location>
        <begin position="189"/>
        <end position="192"/>
    </location>
    <ligand>
        <name>ATP</name>
        <dbReference type="ChEBI" id="CHEBI:30616"/>
    </ligand>
</feature>
<organism>
    <name type="scientific">Rhodopseudomonas palustris (strain BisA53)</name>
    <dbReference type="NCBI Taxonomy" id="316055"/>
    <lineage>
        <taxon>Bacteria</taxon>
        <taxon>Pseudomonadati</taxon>
        <taxon>Pseudomonadota</taxon>
        <taxon>Alphaproteobacteria</taxon>
        <taxon>Hyphomicrobiales</taxon>
        <taxon>Nitrobacteraceae</taxon>
        <taxon>Rhodopseudomonas</taxon>
    </lineage>
</organism>